<dbReference type="EC" id="2.1.1.163" evidence="1"/>
<dbReference type="EC" id="2.1.1.201" evidence="1"/>
<dbReference type="EMBL" id="CP000948">
    <property type="protein sequence ID" value="ACB04855.1"/>
    <property type="molecule type" value="Genomic_DNA"/>
</dbReference>
<dbReference type="RefSeq" id="WP_000227958.1">
    <property type="nucleotide sequence ID" value="NC_010473.1"/>
</dbReference>
<dbReference type="SMR" id="B1XAJ7"/>
<dbReference type="GeneID" id="93778102"/>
<dbReference type="KEGG" id="ecd:ECDH10B_4024"/>
<dbReference type="HOGENOM" id="CLU_037990_0_0_6"/>
<dbReference type="UniPathway" id="UPA00079">
    <property type="reaction ID" value="UER00169"/>
</dbReference>
<dbReference type="UniPathway" id="UPA00232"/>
<dbReference type="GO" id="GO:0008425">
    <property type="term" value="F:2-methoxy-6-polyprenyl-1,4-benzoquinol methyltransferase activity"/>
    <property type="evidence" value="ECO:0007669"/>
    <property type="project" value="UniProtKB-UniRule"/>
</dbReference>
<dbReference type="GO" id="GO:0043770">
    <property type="term" value="F:demethylmenaquinone methyltransferase activity"/>
    <property type="evidence" value="ECO:0007669"/>
    <property type="project" value="UniProtKB-UniRule"/>
</dbReference>
<dbReference type="GO" id="GO:0009060">
    <property type="term" value="P:aerobic respiration"/>
    <property type="evidence" value="ECO:0007669"/>
    <property type="project" value="UniProtKB-UniRule"/>
</dbReference>
<dbReference type="GO" id="GO:0009234">
    <property type="term" value="P:menaquinone biosynthetic process"/>
    <property type="evidence" value="ECO:0007669"/>
    <property type="project" value="UniProtKB-UniRule"/>
</dbReference>
<dbReference type="GO" id="GO:0032259">
    <property type="term" value="P:methylation"/>
    <property type="evidence" value="ECO:0007669"/>
    <property type="project" value="UniProtKB-KW"/>
</dbReference>
<dbReference type="CDD" id="cd02440">
    <property type="entry name" value="AdoMet_MTases"/>
    <property type="match status" value="1"/>
</dbReference>
<dbReference type="FunFam" id="3.40.50.150:FF:000014">
    <property type="entry name" value="Ubiquinone/menaquinone biosynthesis C-methyltransferase UbiE"/>
    <property type="match status" value="1"/>
</dbReference>
<dbReference type="Gene3D" id="3.40.50.150">
    <property type="entry name" value="Vaccinia Virus protein VP39"/>
    <property type="match status" value="1"/>
</dbReference>
<dbReference type="HAMAP" id="MF_01813">
    <property type="entry name" value="MenG_UbiE_methyltr"/>
    <property type="match status" value="1"/>
</dbReference>
<dbReference type="InterPro" id="IPR029063">
    <property type="entry name" value="SAM-dependent_MTases_sf"/>
</dbReference>
<dbReference type="InterPro" id="IPR004033">
    <property type="entry name" value="UbiE/COQ5_MeTrFase"/>
</dbReference>
<dbReference type="InterPro" id="IPR023576">
    <property type="entry name" value="UbiE/COQ5_MeTrFase_CS"/>
</dbReference>
<dbReference type="NCBIfam" id="TIGR01934">
    <property type="entry name" value="MenG_MenH_UbiE"/>
    <property type="match status" value="1"/>
</dbReference>
<dbReference type="NCBIfam" id="NF001240">
    <property type="entry name" value="PRK00216.1-1"/>
    <property type="match status" value="1"/>
</dbReference>
<dbReference type="NCBIfam" id="NF001242">
    <property type="entry name" value="PRK00216.1-3"/>
    <property type="match status" value="1"/>
</dbReference>
<dbReference type="NCBIfam" id="NF001244">
    <property type="entry name" value="PRK00216.1-5"/>
    <property type="match status" value="1"/>
</dbReference>
<dbReference type="PANTHER" id="PTHR43591:SF24">
    <property type="entry name" value="2-METHOXY-6-POLYPRENYL-1,4-BENZOQUINOL METHYLASE, MITOCHONDRIAL"/>
    <property type="match status" value="1"/>
</dbReference>
<dbReference type="PANTHER" id="PTHR43591">
    <property type="entry name" value="METHYLTRANSFERASE"/>
    <property type="match status" value="1"/>
</dbReference>
<dbReference type="Pfam" id="PF01209">
    <property type="entry name" value="Ubie_methyltran"/>
    <property type="match status" value="1"/>
</dbReference>
<dbReference type="SUPFAM" id="SSF53335">
    <property type="entry name" value="S-adenosyl-L-methionine-dependent methyltransferases"/>
    <property type="match status" value="1"/>
</dbReference>
<dbReference type="PROSITE" id="PS51608">
    <property type="entry name" value="SAM_MT_UBIE"/>
    <property type="match status" value="1"/>
</dbReference>
<dbReference type="PROSITE" id="PS01183">
    <property type="entry name" value="UBIE_1"/>
    <property type="match status" value="1"/>
</dbReference>
<dbReference type="PROSITE" id="PS01184">
    <property type="entry name" value="UBIE_2"/>
    <property type="match status" value="1"/>
</dbReference>
<gene>
    <name evidence="1" type="primary">ubiE</name>
    <name type="ordered locus">ECDH10B_4024</name>
</gene>
<reference key="1">
    <citation type="journal article" date="2008" name="J. Bacteriol.">
        <title>The complete genome sequence of Escherichia coli DH10B: insights into the biology of a laboratory workhorse.</title>
        <authorList>
            <person name="Durfee T."/>
            <person name="Nelson R."/>
            <person name="Baldwin S."/>
            <person name="Plunkett G. III"/>
            <person name="Burland V."/>
            <person name="Mau B."/>
            <person name="Petrosino J.F."/>
            <person name="Qin X."/>
            <person name="Muzny D.M."/>
            <person name="Ayele M."/>
            <person name="Gibbs R.A."/>
            <person name="Csorgo B."/>
            <person name="Posfai G."/>
            <person name="Weinstock G.M."/>
            <person name="Blattner F.R."/>
        </authorList>
    </citation>
    <scope>NUCLEOTIDE SEQUENCE [LARGE SCALE GENOMIC DNA]</scope>
    <source>
        <strain>K12 / DH10B</strain>
    </source>
</reference>
<proteinExistence type="inferred from homology"/>
<evidence type="ECO:0000255" key="1">
    <source>
        <dbReference type="HAMAP-Rule" id="MF_01813"/>
    </source>
</evidence>
<protein>
    <recommendedName>
        <fullName evidence="1">Ubiquinone/menaquinone biosynthesis C-methyltransferase UbiE</fullName>
        <ecNumber evidence="1">2.1.1.163</ecNumber>
        <ecNumber evidence="1">2.1.1.201</ecNumber>
    </recommendedName>
    <alternativeName>
        <fullName evidence="1">2-methoxy-6-polyprenyl-1,4-benzoquinol methylase</fullName>
    </alternativeName>
    <alternativeName>
        <fullName evidence="1">Demethylmenaquinone methyltransferase</fullName>
    </alternativeName>
</protein>
<accession>B1XAJ7</accession>
<feature type="chain" id="PRO_1000187761" description="Ubiquinone/menaquinone biosynthesis C-methyltransferase UbiE">
    <location>
        <begin position="1"/>
        <end position="251"/>
    </location>
</feature>
<feature type="binding site" evidence="1">
    <location>
        <position position="74"/>
    </location>
    <ligand>
        <name>S-adenosyl-L-methionine</name>
        <dbReference type="ChEBI" id="CHEBI:59789"/>
    </ligand>
</feature>
<feature type="binding site" evidence="1">
    <location>
        <position position="95"/>
    </location>
    <ligand>
        <name>S-adenosyl-L-methionine</name>
        <dbReference type="ChEBI" id="CHEBI:59789"/>
    </ligand>
</feature>
<feature type="binding site" evidence="1">
    <location>
        <begin position="123"/>
        <end position="124"/>
    </location>
    <ligand>
        <name>S-adenosyl-L-methionine</name>
        <dbReference type="ChEBI" id="CHEBI:59789"/>
    </ligand>
</feature>
<feature type="binding site" evidence="1">
    <location>
        <position position="140"/>
    </location>
    <ligand>
        <name>S-adenosyl-L-methionine</name>
        <dbReference type="ChEBI" id="CHEBI:59789"/>
    </ligand>
</feature>
<sequence length="251" mass="28073">MVDKSQETTHFGFQTVAKEQKADMVAHVFHSVASKYDVMNDLMSFGIHRLWKRFTIDCSGVRRGQTVLDLAGGTGDLTAKFSRLVGETGKVVLADINESMLKMGREKLRNIGVIGNVEYVQANAEALPFPDNTFDCITISFGLRNVTDKDKALRSMYRVLKPGGRLLVLEFSKPIIEPLSKAYDAYSFHVLPRIGSLVANDADSYRYLAESIRMHPDQDTLKAMMQDAGFESVDYYNLTAGVVALHRGYKF</sequence>
<keyword id="KW-0474">Menaquinone biosynthesis</keyword>
<keyword id="KW-0489">Methyltransferase</keyword>
<keyword id="KW-0949">S-adenosyl-L-methionine</keyword>
<keyword id="KW-0808">Transferase</keyword>
<keyword id="KW-0831">Ubiquinone biosynthesis</keyword>
<comment type="function">
    <text evidence="1">Methyltransferase required for the conversion of demethylmenaquinol (DMKH2) to menaquinol (MKH2) and the conversion of 2-polyprenyl-6-methoxy-1,4-benzoquinol (DDMQH2) to 2-polyprenyl-3-methyl-6-methoxy-1,4-benzoquinol (DMQH2).</text>
</comment>
<comment type="catalytic activity">
    <reaction evidence="1">
        <text>a 2-demethylmenaquinol + S-adenosyl-L-methionine = a menaquinol + S-adenosyl-L-homocysteine + H(+)</text>
        <dbReference type="Rhea" id="RHEA:42640"/>
        <dbReference type="Rhea" id="RHEA-COMP:9539"/>
        <dbReference type="Rhea" id="RHEA-COMP:9563"/>
        <dbReference type="ChEBI" id="CHEBI:15378"/>
        <dbReference type="ChEBI" id="CHEBI:18151"/>
        <dbReference type="ChEBI" id="CHEBI:55437"/>
        <dbReference type="ChEBI" id="CHEBI:57856"/>
        <dbReference type="ChEBI" id="CHEBI:59789"/>
        <dbReference type="EC" id="2.1.1.163"/>
    </reaction>
</comment>
<comment type="catalytic activity">
    <reaction evidence="1">
        <text>a 2-methoxy-6-(all-trans-polyprenyl)benzene-1,4-diol + S-adenosyl-L-methionine = a 5-methoxy-2-methyl-3-(all-trans-polyprenyl)benzene-1,4-diol + S-adenosyl-L-homocysteine + H(+)</text>
        <dbReference type="Rhea" id="RHEA:28286"/>
        <dbReference type="Rhea" id="RHEA-COMP:10858"/>
        <dbReference type="Rhea" id="RHEA-COMP:10859"/>
        <dbReference type="ChEBI" id="CHEBI:15378"/>
        <dbReference type="ChEBI" id="CHEBI:57856"/>
        <dbReference type="ChEBI" id="CHEBI:59789"/>
        <dbReference type="ChEBI" id="CHEBI:84166"/>
        <dbReference type="ChEBI" id="CHEBI:84167"/>
        <dbReference type="EC" id="2.1.1.201"/>
    </reaction>
</comment>
<comment type="pathway">
    <text evidence="1">Quinol/quinone metabolism; menaquinone biosynthesis; menaquinol from 1,4-dihydroxy-2-naphthoate: step 2/2.</text>
</comment>
<comment type="pathway">
    <text evidence="1">Cofactor biosynthesis; ubiquinone biosynthesis.</text>
</comment>
<comment type="similarity">
    <text evidence="1">Belongs to the class I-like SAM-binding methyltransferase superfamily. MenG/UbiE family.</text>
</comment>
<name>UBIE_ECODH</name>
<organism>
    <name type="scientific">Escherichia coli (strain K12 / DH10B)</name>
    <dbReference type="NCBI Taxonomy" id="316385"/>
    <lineage>
        <taxon>Bacteria</taxon>
        <taxon>Pseudomonadati</taxon>
        <taxon>Pseudomonadota</taxon>
        <taxon>Gammaproteobacteria</taxon>
        <taxon>Enterobacterales</taxon>
        <taxon>Enterobacteriaceae</taxon>
        <taxon>Escherichia</taxon>
    </lineage>
</organism>